<protein>
    <recommendedName>
        <fullName evidence="1">Photosystem II protein D1</fullName>
        <shortName evidence="1">PSII D1 protein</shortName>
        <ecNumber evidence="1">1.10.3.9</ecNumber>
    </recommendedName>
    <alternativeName>
        <fullName evidence="1">Photosystem II Q(B) protein</fullName>
    </alternativeName>
</protein>
<sequence length="360" mass="39638">MTTIQQQRSSLLKGWPQFCEWVTSTNNRIYVGWFGVLMIPCLLAATTCFIVAFIAAPPVDIDGIREPVAGSFMYGNNIISGAVVPSSNAIGLHFYPIWEAATLDEWLYNGGPYQLVIFHFLIGISAYMGRQWELSYRLGMRPWICVAYSAPVSAAFAVFLVYPFGQGSFSDGMPLGISGTFNFMFVFQAEHNILMHPFHMAGVAGMFGGALFSAMHGSLVTSSLIRETTGLDSQNYGYKFGQEEETYNIVAAHGYFGRLIFQYASFNNSRSLHFFLASWPVICVWLTSMGICTMAFNLNGFNFNQSVVDTSGKVVPTWGDVLNRANLGMEVMHERNAHNFPLDLAAAESTSVALVAPAIG</sequence>
<proteinExistence type="inferred from homology"/>
<name>PSBA_PROM1</name>
<organism>
    <name type="scientific">Prochlorococcus marinus (strain NATL1A)</name>
    <dbReference type="NCBI Taxonomy" id="167555"/>
    <lineage>
        <taxon>Bacteria</taxon>
        <taxon>Bacillati</taxon>
        <taxon>Cyanobacteriota</taxon>
        <taxon>Cyanophyceae</taxon>
        <taxon>Synechococcales</taxon>
        <taxon>Prochlorococcaceae</taxon>
        <taxon>Prochlorococcus</taxon>
    </lineage>
</organism>
<evidence type="ECO:0000255" key="1">
    <source>
        <dbReference type="HAMAP-Rule" id="MF_01379"/>
    </source>
</evidence>
<evidence type="ECO:0000305" key="2"/>
<dbReference type="EC" id="1.10.3.9" evidence="1"/>
<dbReference type="EMBL" id="CP000553">
    <property type="protein sequence ID" value="ABM74867.1"/>
    <property type="molecule type" value="Genomic_DNA"/>
</dbReference>
<dbReference type="EMBL" id="CP000553">
    <property type="protein sequence ID" value="ABM75883.1"/>
    <property type="molecule type" value="Genomic_DNA"/>
</dbReference>
<dbReference type="EMBL" id="CP000553">
    <property type="protein sequence ID" value="ABM76129.1"/>
    <property type="molecule type" value="Genomic_DNA"/>
</dbReference>
<dbReference type="SMR" id="A2C057"/>
<dbReference type="KEGG" id="pme:NATL1_03031"/>
<dbReference type="KEGG" id="pme:NATL1_13251"/>
<dbReference type="KEGG" id="pme:NATL1_15721"/>
<dbReference type="eggNOG" id="ENOG502Z87P">
    <property type="taxonomic scope" value="Bacteria"/>
</dbReference>
<dbReference type="HOGENOM" id="CLU_054206_1_0_3"/>
<dbReference type="Proteomes" id="UP000002592">
    <property type="component" value="Chromosome"/>
</dbReference>
<dbReference type="GO" id="GO:0009523">
    <property type="term" value="C:photosystem II"/>
    <property type="evidence" value="ECO:0007669"/>
    <property type="project" value="UniProtKB-KW"/>
</dbReference>
<dbReference type="GO" id="GO:0031676">
    <property type="term" value="C:plasma membrane-derived thylakoid membrane"/>
    <property type="evidence" value="ECO:0007669"/>
    <property type="project" value="UniProtKB-SubCell"/>
</dbReference>
<dbReference type="GO" id="GO:0016168">
    <property type="term" value="F:chlorophyll binding"/>
    <property type="evidence" value="ECO:0007669"/>
    <property type="project" value="UniProtKB-UniRule"/>
</dbReference>
<dbReference type="GO" id="GO:0045156">
    <property type="term" value="F:electron transporter, transferring electrons within the cyclic electron transport pathway of photosynthesis activity"/>
    <property type="evidence" value="ECO:0007669"/>
    <property type="project" value="InterPro"/>
</dbReference>
<dbReference type="GO" id="GO:0005506">
    <property type="term" value="F:iron ion binding"/>
    <property type="evidence" value="ECO:0007669"/>
    <property type="project" value="UniProtKB-UniRule"/>
</dbReference>
<dbReference type="GO" id="GO:0016682">
    <property type="term" value="F:oxidoreductase activity, acting on diphenols and related substances as donors, oxygen as acceptor"/>
    <property type="evidence" value="ECO:0007669"/>
    <property type="project" value="UniProtKB-UniRule"/>
</dbReference>
<dbReference type="GO" id="GO:0010242">
    <property type="term" value="F:oxygen evolving activity"/>
    <property type="evidence" value="ECO:0007669"/>
    <property type="project" value="UniProtKB-EC"/>
</dbReference>
<dbReference type="GO" id="GO:0009772">
    <property type="term" value="P:photosynthetic electron transport in photosystem II"/>
    <property type="evidence" value="ECO:0007669"/>
    <property type="project" value="InterPro"/>
</dbReference>
<dbReference type="GO" id="GO:0009635">
    <property type="term" value="P:response to herbicide"/>
    <property type="evidence" value="ECO:0007669"/>
    <property type="project" value="UniProtKB-KW"/>
</dbReference>
<dbReference type="FunFam" id="1.20.85.10:FF:000002">
    <property type="entry name" value="Photosystem II protein D1"/>
    <property type="match status" value="1"/>
</dbReference>
<dbReference type="Gene3D" id="1.20.85.10">
    <property type="entry name" value="Photosystem II protein D1-like"/>
    <property type="match status" value="1"/>
</dbReference>
<dbReference type="HAMAP" id="MF_01379">
    <property type="entry name" value="PSII_PsbA_D1"/>
    <property type="match status" value="1"/>
</dbReference>
<dbReference type="InterPro" id="IPR055266">
    <property type="entry name" value="D1/D2"/>
</dbReference>
<dbReference type="InterPro" id="IPR036854">
    <property type="entry name" value="Photo_II_D1/D2_sf"/>
</dbReference>
<dbReference type="InterPro" id="IPR000484">
    <property type="entry name" value="Photo_RC_L/M"/>
</dbReference>
<dbReference type="InterPro" id="IPR055265">
    <property type="entry name" value="Photo_RC_L/M_CS"/>
</dbReference>
<dbReference type="InterPro" id="IPR005867">
    <property type="entry name" value="PSII_D1"/>
</dbReference>
<dbReference type="NCBIfam" id="TIGR01151">
    <property type="entry name" value="psbA"/>
    <property type="match status" value="1"/>
</dbReference>
<dbReference type="PANTHER" id="PTHR33149:SF12">
    <property type="entry name" value="PHOTOSYSTEM II D2 PROTEIN"/>
    <property type="match status" value="1"/>
</dbReference>
<dbReference type="PANTHER" id="PTHR33149">
    <property type="entry name" value="PHOTOSYSTEM II PROTEIN D1"/>
    <property type="match status" value="1"/>
</dbReference>
<dbReference type="Pfam" id="PF00124">
    <property type="entry name" value="Photo_RC"/>
    <property type="match status" value="1"/>
</dbReference>
<dbReference type="PRINTS" id="PR00256">
    <property type="entry name" value="REACTNCENTRE"/>
</dbReference>
<dbReference type="SUPFAM" id="SSF81483">
    <property type="entry name" value="Bacterial photosystem II reaction centre, L and M subunits"/>
    <property type="match status" value="1"/>
</dbReference>
<dbReference type="PROSITE" id="PS00244">
    <property type="entry name" value="REACTION_CENTER"/>
    <property type="match status" value="1"/>
</dbReference>
<accession>A2C057</accession>
<comment type="function">
    <text evidence="1">Photosystem II (PSII) is a light-driven water:plastoquinone oxidoreductase that uses light energy to abstract electrons from H(2)O, generating O(2) and a proton gradient subsequently used for ATP formation. It consists of a core antenna complex that captures photons, and an electron transfer chain that converts photonic excitation into a charge separation. The D1/D2 (PsbA/PsbD) reaction center heterodimer binds P680, the primary electron donor of PSII as well as several subsequent electron acceptors.</text>
</comment>
<comment type="catalytic activity">
    <reaction evidence="1">
        <text>2 a plastoquinone + 4 hnu + 2 H2O = 2 a plastoquinol + O2</text>
        <dbReference type="Rhea" id="RHEA:36359"/>
        <dbReference type="Rhea" id="RHEA-COMP:9561"/>
        <dbReference type="Rhea" id="RHEA-COMP:9562"/>
        <dbReference type="ChEBI" id="CHEBI:15377"/>
        <dbReference type="ChEBI" id="CHEBI:15379"/>
        <dbReference type="ChEBI" id="CHEBI:17757"/>
        <dbReference type="ChEBI" id="CHEBI:30212"/>
        <dbReference type="ChEBI" id="CHEBI:62192"/>
        <dbReference type="EC" id="1.10.3.9"/>
    </reaction>
</comment>
<comment type="cofactor">
    <text evidence="1">The D1/D2 heterodimer binds P680, chlorophylls that are the primary electron donor of PSII, and subsequent electron acceptors. It shares a non-heme iron and each subunit binds pheophytin, quinone, additional chlorophylls, carotenoids and lipids. D1 provides most of the ligands for the Mn4-Ca-O5 cluster of the oxygen-evolving complex (OEC). There is also a Cl(-1) ion associated with D1 and D2, which is required for oxygen evolution. The PSII complex binds additional chlorophylls, carotenoids and specific lipids.</text>
</comment>
<comment type="subunit">
    <text evidence="2">PSII is composed of 1 copy each of membrane proteins PsbA, PsbB, PsbC, PsbD, PsbE, PsbF, PsbH, PsbI, PsbJ, PsbK, PsbL, PsbM, PsbT, PsbX, PsbY, Psb30/Ycf12, peripheral proteins PsbO, CyanoQ (PsbQ), PsbU, PsbV and a large number of cofactors. It forms dimeric complexes.</text>
</comment>
<comment type="subcellular location">
    <subcellularLocation>
        <location evidence="1">Cellular thylakoid membrane</location>
        <topology evidence="1">Multi-pass membrane protein</topology>
    </subcellularLocation>
</comment>
<comment type="PTM">
    <text evidence="1">Tyr-162 forms a radical intermediate that is referred to as redox-active TyrZ, YZ or Y-Z.</text>
</comment>
<comment type="PTM">
    <text evidence="1">C-terminally processed by CtpA; processing is essential to allow assembly of the oxygen-evolving complex and thus photosynthetic growth.</text>
</comment>
<comment type="miscellaneous">
    <text evidence="1">Cyanobacteria usually contain more than 2 copies of the psbA gene.</text>
</comment>
<comment type="miscellaneous">
    <text evidence="1">2 of the reaction center chlorophylls (ChlD1 and ChlD2) are entirely coordinated by water.</text>
</comment>
<comment type="miscellaneous">
    <text evidence="1">Herbicides such as atrazine, BNT, diuron or ioxynil bind in the Q(B) binding site and block subsequent electron transfer.</text>
</comment>
<comment type="similarity">
    <text evidence="1">Belongs to the reaction center PufL/M/PsbA/D family.</text>
</comment>
<reference key="1">
    <citation type="journal article" date="2007" name="PLoS Genet.">
        <title>Patterns and implications of gene gain and loss in the evolution of Prochlorococcus.</title>
        <authorList>
            <person name="Kettler G.C."/>
            <person name="Martiny A.C."/>
            <person name="Huang K."/>
            <person name="Zucker J."/>
            <person name="Coleman M.L."/>
            <person name="Rodrigue S."/>
            <person name="Chen F."/>
            <person name="Lapidus A."/>
            <person name="Ferriera S."/>
            <person name="Johnson J."/>
            <person name="Steglich C."/>
            <person name="Church G.M."/>
            <person name="Richardson P."/>
            <person name="Chisholm S.W."/>
        </authorList>
    </citation>
    <scope>NUCLEOTIDE SEQUENCE [LARGE SCALE GENOMIC DNA]</scope>
    <source>
        <strain>NATL1A</strain>
    </source>
</reference>
<gene>
    <name evidence="1 2" type="primary">psbA1</name>
    <name type="ordered locus">NATL1_03031</name>
</gene>
<gene>
    <name evidence="1 2" type="primary">psbA2</name>
    <name type="ordered locus">NATL1_13251</name>
</gene>
<gene>
    <name evidence="1 2" type="primary">psbA3</name>
    <name type="ordered locus">NATL1_15721</name>
</gene>
<feature type="chain" id="PRO_0000316367" description="Photosystem II protein D1" evidence="1">
    <location>
        <begin position="1"/>
        <end position="345"/>
    </location>
</feature>
<feature type="propeptide" id="PRO_0000316368" evidence="1">
    <location>
        <begin position="346"/>
        <end position="360"/>
    </location>
</feature>
<feature type="transmembrane region" description="Helical" evidence="1">
    <location>
        <begin position="30"/>
        <end position="47"/>
    </location>
</feature>
<feature type="transmembrane region" description="Helical" evidence="1">
    <location>
        <begin position="119"/>
        <end position="134"/>
    </location>
</feature>
<feature type="transmembrane region" description="Helical" evidence="1">
    <location>
        <begin position="143"/>
        <end position="157"/>
    </location>
</feature>
<feature type="transmembrane region" description="Helical" evidence="1">
    <location>
        <begin position="198"/>
        <end position="219"/>
    </location>
</feature>
<feature type="transmembrane region" description="Helical" evidence="1">
    <location>
        <begin position="275"/>
        <end position="289"/>
    </location>
</feature>
<feature type="binding site" description="axial binding residue" evidence="1">
    <location>
        <position position="119"/>
    </location>
    <ligand>
        <name>chlorophyll a</name>
        <dbReference type="ChEBI" id="CHEBI:58416"/>
        <label>ChlzD1</label>
    </ligand>
    <ligandPart>
        <name>Mg</name>
        <dbReference type="ChEBI" id="CHEBI:25107"/>
    </ligandPart>
</feature>
<feature type="binding site" evidence="1">
    <location>
        <position position="127"/>
    </location>
    <ligand>
        <name>pheophytin a</name>
        <dbReference type="ChEBI" id="CHEBI:136840"/>
        <label>D1</label>
    </ligand>
</feature>
<feature type="binding site" evidence="1">
    <location>
        <position position="171"/>
    </location>
    <ligand>
        <name>[CaMn4O5] cluster</name>
        <dbReference type="ChEBI" id="CHEBI:189552"/>
    </ligand>
</feature>
<feature type="binding site" evidence="1">
    <location>
        <position position="190"/>
    </location>
    <ligand>
        <name>[CaMn4O5] cluster</name>
        <dbReference type="ChEBI" id="CHEBI:189552"/>
    </ligand>
</feature>
<feature type="binding site" description="axial binding residue" evidence="1">
    <location>
        <position position="199"/>
    </location>
    <ligand>
        <name>chlorophyll a</name>
        <dbReference type="ChEBI" id="CHEBI:58416"/>
        <label>PD1</label>
    </ligand>
    <ligandPart>
        <name>Mg</name>
        <dbReference type="ChEBI" id="CHEBI:25107"/>
    </ligandPart>
</feature>
<feature type="binding site" evidence="1">
    <location>
        <position position="216"/>
    </location>
    <ligand>
        <name>a quinone</name>
        <dbReference type="ChEBI" id="CHEBI:132124"/>
        <label>B</label>
    </ligand>
</feature>
<feature type="binding site" evidence="1">
    <location>
        <position position="216"/>
    </location>
    <ligand>
        <name>Fe cation</name>
        <dbReference type="ChEBI" id="CHEBI:24875"/>
        <note>ligand shared with heterodimeric partner</note>
    </ligand>
</feature>
<feature type="binding site" evidence="1">
    <location>
        <begin position="265"/>
        <end position="266"/>
    </location>
    <ligand>
        <name>a quinone</name>
        <dbReference type="ChEBI" id="CHEBI:132124"/>
        <label>B</label>
    </ligand>
</feature>
<feature type="binding site" evidence="1">
    <location>
        <position position="273"/>
    </location>
    <ligand>
        <name>Fe cation</name>
        <dbReference type="ChEBI" id="CHEBI:24875"/>
        <note>ligand shared with heterodimeric partner</note>
    </ligand>
</feature>
<feature type="binding site" evidence="1">
    <location>
        <position position="333"/>
    </location>
    <ligand>
        <name>[CaMn4O5] cluster</name>
        <dbReference type="ChEBI" id="CHEBI:189552"/>
    </ligand>
</feature>
<feature type="binding site" evidence="1">
    <location>
        <position position="334"/>
    </location>
    <ligand>
        <name>[CaMn4O5] cluster</name>
        <dbReference type="ChEBI" id="CHEBI:189552"/>
    </ligand>
</feature>
<feature type="binding site" evidence="1">
    <location>
        <position position="343"/>
    </location>
    <ligand>
        <name>[CaMn4O5] cluster</name>
        <dbReference type="ChEBI" id="CHEBI:189552"/>
    </ligand>
</feature>
<feature type="binding site" evidence="1">
    <location>
        <position position="345"/>
    </location>
    <ligand>
        <name>[CaMn4O5] cluster</name>
        <dbReference type="ChEBI" id="CHEBI:189552"/>
    </ligand>
</feature>
<feature type="site" description="Tyrosine radical intermediate" evidence="1">
    <location>
        <position position="162"/>
    </location>
</feature>
<feature type="site" description="Stabilizes free radical intermediate" evidence="1">
    <location>
        <position position="191"/>
    </location>
</feature>
<feature type="site" description="Cleavage; by CtpA" evidence="1">
    <location>
        <begin position="345"/>
        <end position="346"/>
    </location>
</feature>
<keyword id="KW-0106">Calcium</keyword>
<keyword id="KW-0148">Chlorophyll</keyword>
<keyword id="KW-0157">Chromophore</keyword>
<keyword id="KW-0249">Electron transport</keyword>
<keyword id="KW-0359">Herbicide resistance</keyword>
<keyword id="KW-0408">Iron</keyword>
<keyword id="KW-0460">Magnesium</keyword>
<keyword id="KW-0464">Manganese</keyword>
<keyword id="KW-0472">Membrane</keyword>
<keyword id="KW-0479">Metal-binding</keyword>
<keyword id="KW-0560">Oxidoreductase</keyword>
<keyword id="KW-0602">Photosynthesis</keyword>
<keyword id="KW-0604">Photosystem II</keyword>
<keyword id="KW-0793">Thylakoid</keyword>
<keyword id="KW-0812">Transmembrane</keyword>
<keyword id="KW-1133">Transmembrane helix</keyword>
<keyword id="KW-0813">Transport</keyword>